<keyword id="KW-0472">Membrane</keyword>
<keyword id="KW-0496">Mitochondrion</keyword>
<keyword id="KW-0999">Mitochondrion inner membrane</keyword>
<keyword id="KW-1185">Reference proteome</keyword>
<keyword id="KW-1278">Translocase</keyword>
<keyword id="KW-0812">Transmembrane</keyword>
<keyword id="KW-1133">Transmembrane helix</keyword>
<accession>Q02654</accession>
<name>COX3_PODAN</name>
<comment type="function">
    <text evidence="1">Component of the cytochrome c oxidase, the last enzyme in the mitochondrial electron transport chain which drives oxidative phosphorylation. The respiratory chain contains 3 multisubunit complexes succinate dehydrogenase (complex II, CII), ubiquinol-cytochrome c oxidoreductase (cytochrome b-c1 complex, complex III, CIII) and cytochrome c oxidase (complex IV, CIV), that cooperate to transfer electrons derived from NADH and succinate to molecular oxygen, creating an electrochemical gradient over the inner membrane that drives transmembrane transport and the ATP synthase. Cytochrome c oxidase is the component of the respiratory chain that catalyzes the reduction of oxygen to water. Electrons originating from reduced cytochrome c in the intermembrane space (IMS) are transferred via the dinuclear copper A center (CU(A)) of subunit 2 and heme A of subunit 1 to the active site in subunit 1, a binuclear center (BNC) formed by heme A3 and copper B (CU(B)). The BNC reduces molecular oxygen to 2 water molecules using 4 electrons from cytochrome c in the IMS and 4 protons from the mitochondrial matrix.</text>
</comment>
<comment type="catalytic activity">
    <reaction evidence="1">
        <text>4 Fe(II)-[cytochrome c] + O2 + 8 H(+)(in) = 4 Fe(III)-[cytochrome c] + 2 H2O + 4 H(+)(out)</text>
        <dbReference type="Rhea" id="RHEA:11436"/>
        <dbReference type="Rhea" id="RHEA-COMP:10350"/>
        <dbReference type="Rhea" id="RHEA-COMP:14399"/>
        <dbReference type="ChEBI" id="CHEBI:15377"/>
        <dbReference type="ChEBI" id="CHEBI:15378"/>
        <dbReference type="ChEBI" id="CHEBI:15379"/>
        <dbReference type="ChEBI" id="CHEBI:29033"/>
        <dbReference type="ChEBI" id="CHEBI:29034"/>
        <dbReference type="EC" id="7.1.1.9"/>
    </reaction>
    <physiologicalReaction direction="left-to-right" evidence="1">
        <dbReference type="Rhea" id="RHEA:11437"/>
    </physiologicalReaction>
</comment>
<comment type="subunit">
    <text evidence="1">Component of the cytochrome c oxidase (complex IV, CIV), a multisubunit enzyme composed of a catalytic core of 3 subunits and several supernumerary subunits. The complex exists as a monomer or a dimer and forms supercomplexes (SCs) in the inner mitochondrial membrane with ubiquinol-cytochrome c oxidoreductase (cytochrome b-c1 complex, complex III, CIII).</text>
</comment>
<comment type="subcellular location">
    <subcellularLocation>
        <location evidence="1">Mitochondrion inner membrane</location>
        <topology evidence="1">Multi-pass membrane protein</topology>
    </subcellularLocation>
</comment>
<comment type="similarity">
    <text evidence="3">Belongs to the cytochrome c oxidase subunit 3 family.</text>
</comment>
<feature type="chain" id="PRO_0000183835" description="Cytochrome c oxidase subunit 3">
    <location>
        <begin position="1"/>
        <end position="269"/>
    </location>
</feature>
<feature type="transmembrane region" description="Helical" evidence="2">
    <location>
        <begin position="46"/>
        <end position="66"/>
    </location>
</feature>
<feature type="transmembrane region" description="Helical" evidence="2">
    <location>
        <begin position="90"/>
        <end position="110"/>
    </location>
</feature>
<feature type="transmembrane region" description="Helical" evidence="2">
    <location>
        <begin position="138"/>
        <end position="160"/>
    </location>
</feature>
<feature type="transmembrane region" description="Helical" evidence="2">
    <location>
        <begin position="167"/>
        <end position="187"/>
    </location>
</feature>
<feature type="transmembrane region" description="Helical" evidence="2">
    <location>
        <begin position="207"/>
        <end position="227"/>
    </location>
</feature>
<feature type="transmembrane region" description="Helical" evidence="2">
    <location>
        <begin position="247"/>
        <end position="267"/>
    </location>
</feature>
<protein>
    <recommendedName>
        <fullName>Cytochrome c oxidase subunit 3</fullName>
        <ecNumber>7.1.1.9</ecNumber>
    </recommendedName>
    <alternativeName>
        <fullName>Cytochrome c oxidase polypeptide III</fullName>
    </alternativeName>
</protein>
<evidence type="ECO:0000250" key="1">
    <source>
        <dbReference type="UniProtKB" id="P00420"/>
    </source>
</evidence>
<evidence type="ECO:0000255" key="2"/>
<evidence type="ECO:0000305" key="3"/>
<organism>
    <name type="scientific">Podospora anserina (strain S / ATCC MYA-4624 / DSM 980 / FGSC 10383)</name>
    <name type="common">Pleurage anserina</name>
    <dbReference type="NCBI Taxonomy" id="515849"/>
    <lineage>
        <taxon>Eukaryota</taxon>
        <taxon>Fungi</taxon>
        <taxon>Dikarya</taxon>
        <taxon>Ascomycota</taxon>
        <taxon>Pezizomycotina</taxon>
        <taxon>Sordariomycetes</taxon>
        <taxon>Sordariomycetidae</taxon>
        <taxon>Sordariales</taxon>
        <taxon>Podosporaceae</taxon>
        <taxon>Podospora</taxon>
        <taxon>Podospora anserina</taxon>
    </lineage>
</organism>
<dbReference type="EC" id="7.1.1.9"/>
<dbReference type="EMBL" id="X55026">
    <property type="protein sequence ID" value="CAA38768.1"/>
    <property type="molecule type" value="Genomic_DNA"/>
</dbReference>
<dbReference type="EMBL" id="X14734">
    <property type="protein sequence ID" value="CAA32858.1"/>
    <property type="molecule type" value="Genomic_DNA"/>
</dbReference>
<dbReference type="PIR" id="S06029">
    <property type="entry name" value="S06029"/>
</dbReference>
<dbReference type="SMR" id="Q02654"/>
<dbReference type="FunCoup" id="Q02654">
    <property type="interactions" value="211"/>
</dbReference>
<dbReference type="STRING" id="515849.Q02654"/>
<dbReference type="KEGG" id="pan:PoanfMp07"/>
<dbReference type="InParanoid" id="Q02654"/>
<dbReference type="Proteomes" id="UP000001197">
    <property type="component" value="Mitochondrion"/>
</dbReference>
<dbReference type="GO" id="GO:0005743">
    <property type="term" value="C:mitochondrial inner membrane"/>
    <property type="evidence" value="ECO:0007669"/>
    <property type="project" value="UniProtKB-SubCell"/>
</dbReference>
<dbReference type="GO" id="GO:0004129">
    <property type="term" value="F:cytochrome-c oxidase activity"/>
    <property type="evidence" value="ECO:0007669"/>
    <property type="project" value="UniProtKB-EC"/>
</dbReference>
<dbReference type="GO" id="GO:0006123">
    <property type="term" value="P:mitochondrial electron transport, cytochrome c to oxygen"/>
    <property type="evidence" value="ECO:0007669"/>
    <property type="project" value="TreeGrafter"/>
</dbReference>
<dbReference type="CDD" id="cd01665">
    <property type="entry name" value="Cyt_c_Oxidase_III"/>
    <property type="match status" value="1"/>
</dbReference>
<dbReference type="FunFam" id="1.10.287.70:FF:000082">
    <property type="entry name" value="Cytochrome c oxidase subunit 3"/>
    <property type="match status" value="1"/>
</dbReference>
<dbReference type="FunFam" id="1.20.120.80:FF:000002">
    <property type="entry name" value="Cytochrome c oxidase subunit 3"/>
    <property type="match status" value="1"/>
</dbReference>
<dbReference type="Gene3D" id="1.10.287.70">
    <property type="match status" value="1"/>
</dbReference>
<dbReference type="Gene3D" id="1.20.120.80">
    <property type="entry name" value="Cytochrome c oxidase, subunit III, four-helix bundle"/>
    <property type="match status" value="1"/>
</dbReference>
<dbReference type="InterPro" id="IPR024791">
    <property type="entry name" value="Cyt_c/ubiquinol_Oxase_su3"/>
</dbReference>
<dbReference type="InterPro" id="IPR033945">
    <property type="entry name" value="Cyt_c_oxase_su3_dom"/>
</dbReference>
<dbReference type="InterPro" id="IPR000298">
    <property type="entry name" value="Cyt_c_oxidase-like_su3"/>
</dbReference>
<dbReference type="InterPro" id="IPR035973">
    <property type="entry name" value="Cyt_c_oxidase_su3-like_sf"/>
</dbReference>
<dbReference type="InterPro" id="IPR013833">
    <property type="entry name" value="Cyt_c_oxidase_su3_a-hlx"/>
</dbReference>
<dbReference type="PANTHER" id="PTHR11403:SF7">
    <property type="entry name" value="CYTOCHROME C OXIDASE SUBUNIT 3"/>
    <property type="match status" value="1"/>
</dbReference>
<dbReference type="PANTHER" id="PTHR11403">
    <property type="entry name" value="CYTOCHROME C OXIDASE SUBUNIT III"/>
    <property type="match status" value="1"/>
</dbReference>
<dbReference type="Pfam" id="PF00510">
    <property type="entry name" value="COX3"/>
    <property type="match status" value="1"/>
</dbReference>
<dbReference type="SUPFAM" id="SSF81452">
    <property type="entry name" value="Cytochrome c oxidase subunit III-like"/>
    <property type="match status" value="1"/>
</dbReference>
<dbReference type="PROSITE" id="PS50253">
    <property type="entry name" value="COX3"/>
    <property type="match status" value="1"/>
</dbReference>
<proteinExistence type="inferred from homology"/>
<geneLocation type="mitochondrion"/>
<reference key="1">
    <citation type="journal article" date="1989" name="J. Mol. Evol.">
        <title>DNA sequence, structure, and phylogenetic relationship of the small subunit rRNA coding region of mitochondrial DNA from Podospora anserina.</title>
        <authorList>
            <person name="Cummings D.J."/>
            <person name="Domenico J.M."/>
            <person name="Nelson J."/>
            <person name="Sogin M.L."/>
        </authorList>
    </citation>
    <scope>NUCLEOTIDE SEQUENCE [GENOMIC DNA]</scope>
</reference>
<reference key="2">
    <citation type="journal article" date="1990" name="Curr. Genet.">
        <title>The complete DNA sequence of the mitochondrial genome of Podospora anserina.</title>
        <authorList>
            <person name="Cummings D.J."/>
            <person name="McNally K.L."/>
            <person name="Domenico J.M."/>
            <person name="Matsuura E.T."/>
        </authorList>
    </citation>
    <scope>NUCLEOTIDE SEQUENCE [LARGE SCALE GENOMIC DNA]</scope>
    <source>
        <strain>s</strain>
    </source>
</reference>
<gene>
    <name type="primary">COIII</name>
</gene>
<sequence>MTNLIRSNFQDHPFHLVSPSPWPLYTSVSLLNLATSAALSMHNFNNSYYLFFISLILVISSMAFWFRDIISEATLLGDHTLAVQKGLNLGVILFIVSEALFFLAIFWAFFHSSLTPTVELGSQWPPIGIEPINPFELPLLNTVILLSSGATVTYAHHSLIHGERKGALYGSIITILLAIIFTVFQGVEYNVSSFTISDGAFGTCFYFGTGFHGFHVIIGTIFLAVALWRIFAYHLTDNHHVGFEGGILYWHFVDVVWLFLYVSIYYWGS</sequence>